<sequence length="256" mass="29423">MAVGKNKRLSKGKKGIKKKVVDPFSRKDWYDIKAPSIFDVRNVGKTLVNRSQGLKNANDSLKGRIIEVSLGDLNKEEEQSFRKIKLRVDEVQGKNCLTNFHGMDFTSDKLRSLVRKWQTLIEAHVDVKTTDGYLLRLFAIGFTKRRPTQVRKTTYAQSSQVREIRKKMFEIMTREATNCDLKELVQKFVPEAIGREIEKASRSIYPLQNVYVRKAKILKAPKFDVSKLMELHGESTDETGTKIAKDFKEPEVLESV</sequence>
<evidence type="ECO:0000255" key="1">
    <source>
        <dbReference type="HAMAP-Rule" id="MF_03122"/>
    </source>
</evidence>
<evidence type="ECO:0000305" key="2"/>
<proteinExistence type="evidence at transcript level"/>
<organism>
    <name type="scientific">Lentinula edodes</name>
    <name type="common">Shiitake mushroom</name>
    <name type="synonym">Lentinus edodes</name>
    <dbReference type="NCBI Taxonomy" id="5353"/>
    <lineage>
        <taxon>Eukaryota</taxon>
        <taxon>Fungi</taxon>
        <taxon>Dikarya</taxon>
        <taxon>Basidiomycota</taxon>
        <taxon>Agaricomycotina</taxon>
        <taxon>Agaricomycetes</taxon>
        <taxon>Agaricomycetidae</taxon>
        <taxon>Agaricales</taxon>
        <taxon>Marasmiineae</taxon>
        <taxon>Omphalotaceae</taxon>
        <taxon>Lentinula</taxon>
    </lineage>
</organism>
<reference key="1">
    <citation type="journal article" date="2004" name="Biosci. Biotechnol. Biochem.">
        <title>Isolation of genes specifically expressed in the fruit body of the edible basidiomycete Lentinula edodes.</title>
        <authorList>
            <person name="Hirano T."/>
            <person name="Sato T."/>
            <person name="Enei H."/>
        </authorList>
    </citation>
    <scope>NUCLEOTIDE SEQUENCE [MRNA]</scope>
    <source>
        <tissue>Fruiting body</tissue>
    </source>
</reference>
<dbReference type="EMBL" id="AB116637">
    <property type="protein sequence ID" value="BAD11816.1"/>
    <property type="molecule type" value="mRNA"/>
</dbReference>
<dbReference type="SMR" id="Q764D2"/>
<dbReference type="OrthoDB" id="9834376at2759"/>
<dbReference type="GO" id="GO:0022627">
    <property type="term" value="C:cytosolic small ribosomal subunit"/>
    <property type="evidence" value="ECO:0007669"/>
    <property type="project" value="UniProtKB-UniRule"/>
</dbReference>
<dbReference type="GO" id="GO:0003735">
    <property type="term" value="F:structural constituent of ribosome"/>
    <property type="evidence" value="ECO:0007669"/>
    <property type="project" value="UniProtKB-UniRule"/>
</dbReference>
<dbReference type="GO" id="GO:0006412">
    <property type="term" value="P:translation"/>
    <property type="evidence" value="ECO:0007669"/>
    <property type="project" value="UniProtKB-UniRule"/>
</dbReference>
<dbReference type="HAMAP" id="MF_03122">
    <property type="entry name" value="Ribosomal_eS1_euk"/>
    <property type="match status" value="1"/>
</dbReference>
<dbReference type="InterPro" id="IPR001593">
    <property type="entry name" value="Ribosomal_eS1"/>
</dbReference>
<dbReference type="InterPro" id="IPR018281">
    <property type="entry name" value="Ribosomal_eS1_CS"/>
</dbReference>
<dbReference type="InterPro" id="IPR027500">
    <property type="entry name" value="Ribosomal_eS1_euk"/>
</dbReference>
<dbReference type="PANTHER" id="PTHR11830">
    <property type="entry name" value="40S RIBOSOMAL PROTEIN S3A"/>
    <property type="match status" value="1"/>
</dbReference>
<dbReference type="Pfam" id="PF01015">
    <property type="entry name" value="Ribosomal_S3Ae"/>
    <property type="match status" value="1"/>
</dbReference>
<dbReference type="SMART" id="SM01397">
    <property type="entry name" value="Ribosomal_S3Ae"/>
    <property type="match status" value="1"/>
</dbReference>
<dbReference type="PROSITE" id="PS01191">
    <property type="entry name" value="RIBOSOMAL_S3AE"/>
    <property type="match status" value="1"/>
</dbReference>
<keyword id="KW-0007">Acetylation</keyword>
<keyword id="KW-0963">Cytoplasm</keyword>
<keyword id="KW-0687">Ribonucleoprotein</keyword>
<keyword id="KW-0689">Ribosomal protein</keyword>
<comment type="subunit">
    <text evidence="1">Component of the small ribosomal subunit. Mature ribosomes consist of a small (40S) and a large (60S) subunit. The 40S subunit contains about 33 different proteins and 1 molecule of RNA (18S). The 60S subunit contains about 49 different proteins and 3 molecules of RNA (25S, 5.8S and 5S).</text>
</comment>
<comment type="subcellular location">
    <subcellularLocation>
        <location evidence="1">Cytoplasm</location>
    </subcellularLocation>
</comment>
<comment type="similarity">
    <text evidence="1">Belongs to the eukaryotic ribosomal protein eS1 family.</text>
</comment>
<gene>
    <name evidence="1" type="primary">RPS1</name>
    <name type="synonym">cyc07</name>
    <name type="synonym">fbg13</name>
</gene>
<feature type="initiator methionine" description="Removed" evidence="1">
    <location>
        <position position="1"/>
    </location>
</feature>
<feature type="chain" id="PRO_0000389382" description="Small ribosomal subunit protein eS1">
    <location>
        <begin position="2"/>
        <end position="256"/>
    </location>
</feature>
<feature type="modified residue" description="N-acetylalanine; partial" evidence="1">
    <location>
        <position position="2"/>
    </location>
</feature>
<protein>
    <recommendedName>
        <fullName evidence="1">Small ribosomal subunit protein eS1</fullName>
    </recommendedName>
    <alternativeName>
        <fullName evidence="2">40S ribosomal protein S1</fullName>
    </alternativeName>
    <alternativeName>
        <fullName>Protein cyc07</fullName>
    </alternativeName>
</protein>
<accession>Q764D2</accession>
<name>RS3A_LENED</name>